<feature type="chain" id="PRO_1000065865" description="UPF0441 protein KPN78578_33850">
    <location>
        <begin position="1"/>
        <end position="223"/>
    </location>
</feature>
<feature type="region of interest" description="Disordered" evidence="2">
    <location>
        <begin position="165"/>
        <end position="223"/>
    </location>
</feature>
<feature type="compositionally biased region" description="Low complexity" evidence="2">
    <location>
        <begin position="177"/>
        <end position="193"/>
    </location>
</feature>
<feature type="compositionally biased region" description="Low complexity" evidence="2">
    <location>
        <begin position="209"/>
        <end position="223"/>
    </location>
</feature>
<dbReference type="EMBL" id="CP000647">
    <property type="protein sequence ID" value="ABR78846.1"/>
    <property type="molecule type" value="Genomic_DNA"/>
</dbReference>
<dbReference type="RefSeq" id="WP_002916849.1">
    <property type="nucleotide sequence ID" value="NC_009648.1"/>
</dbReference>
<dbReference type="STRING" id="272620.KPN_03450"/>
<dbReference type="jPOST" id="A6TE25"/>
<dbReference type="PaxDb" id="272620-KPN_03450"/>
<dbReference type="EnsemblBacteria" id="ABR78846">
    <property type="protein sequence ID" value="ABR78846"/>
    <property type="gene ID" value="KPN_03450"/>
</dbReference>
<dbReference type="KEGG" id="kpn:KPN_03450"/>
<dbReference type="HOGENOM" id="CLU_095624_0_0_6"/>
<dbReference type="Proteomes" id="UP000000265">
    <property type="component" value="Chromosome"/>
</dbReference>
<dbReference type="HAMAP" id="MF_01188">
    <property type="entry name" value="UPF0441"/>
    <property type="match status" value="1"/>
</dbReference>
<dbReference type="InterPro" id="IPR009576">
    <property type="entry name" value="Biofilm_formation_YgiB"/>
</dbReference>
<dbReference type="NCBIfam" id="NF008655">
    <property type="entry name" value="PRK11653.1"/>
    <property type="match status" value="1"/>
</dbReference>
<dbReference type="Pfam" id="PF06693">
    <property type="entry name" value="DUF1190"/>
    <property type="match status" value="1"/>
</dbReference>
<sequence length="223" mass="23380">MKRTKNINHSSFRKSWSARHLTPVALAVTAVFMLAGCEKSDETVSLYQNADDCSAANPGKAAECTTAYTNAVKEAERTAPKYATREDCVAEFGEGQCQQTPAQAGVAPENQAQAQSSGSFWMPLMAGYMMGRLMGGGMAQQQPLFSSKNPASPAYGQYTDASGKSYGAAQPGRTMNVPKTAMAPKPATTTTVTRGGFGESVAKQSTMQRSAAGSTSSSRSMGG</sequence>
<name>Y3385_KLEP7</name>
<evidence type="ECO:0000255" key="1">
    <source>
        <dbReference type="HAMAP-Rule" id="MF_01188"/>
    </source>
</evidence>
<evidence type="ECO:0000256" key="2">
    <source>
        <dbReference type="SAM" id="MobiDB-lite"/>
    </source>
</evidence>
<comment type="similarity">
    <text evidence="1">Belongs to the UPF0441 family.</text>
</comment>
<protein>
    <recommendedName>
        <fullName evidence="1">UPF0441 protein KPN78578_33850</fullName>
    </recommendedName>
</protein>
<gene>
    <name type="ordered locus">KPN78578_33850</name>
    <name type="ORF">KPN_03450</name>
</gene>
<proteinExistence type="inferred from homology"/>
<organism>
    <name type="scientific">Klebsiella pneumoniae subsp. pneumoniae (strain ATCC 700721 / MGH 78578)</name>
    <dbReference type="NCBI Taxonomy" id="272620"/>
    <lineage>
        <taxon>Bacteria</taxon>
        <taxon>Pseudomonadati</taxon>
        <taxon>Pseudomonadota</taxon>
        <taxon>Gammaproteobacteria</taxon>
        <taxon>Enterobacterales</taxon>
        <taxon>Enterobacteriaceae</taxon>
        <taxon>Klebsiella/Raoultella group</taxon>
        <taxon>Klebsiella</taxon>
        <taxon>Klebsiella pneumoniae complex</taxon>
    </lineage>
</organism>
<reference key="1">
    <citation type="submission" date="2006-09" db="EMBL/GenBank/DDBJ databases">
        <authorList>
            <consortium name="The Klebsiella pneumonia Genome Sequencing Project"/>
            <person name="McClelland M."/>
            <person name="Sanderson E.K."/>
            <person name="Spieth J."/>
            <person name="Clifton W.S."/>
            <person name="Latreille P."/>
            <person name="Sabo A."/>
            <person name="Pepin K."/>
            <person name="Bhonagiri V."/>
            <person name="Porwollik S."/>
            <person name="Ali J."/>
            <person name="Wilson R.K."/>
        </authorList>
    </citation>
    <scope>NUCLEOTIDE SEQUENCE [LARGE SCALE GENOMIC DNA]</scope>
    <source>
        <strain>ATCC 700721 / MGH 78578</strain>
    </source>
</reference>
<accession>A6TE25</accession>